<organism>
    <name type="scientific">Schizosaccharomyces pombe (strain 972 / ATCC 24843)</name>
    <name type="common">Fission yeast</name>
    <dbReference type="NCBI Taxonomy" id="284812"/>
    <lineage>
        <taxon>Eukaryota</taxon>
        <taxon>Fungi</taxon>
        <taxon>Dikarya</taxon>
        <taxon>Ascomycota</taxon>
        <taxon>Taphrinomycotina</taxon>
        <taxon>Schizosaccharomycetes</taxon>
        <taxon>Schizosaccharomycetales</taxon>
        <taxon>Schizosaccharomycetaceae</taxon>
        <taxon>Schizosaccharomyces</taxon>
    </lineage>
</organism>
<keyword id="KW-0472">Membrane</keyword>
<keyword id="KW-0489">Methyltransferase</keyword>
<keyword id="KW-0496">Mitochondrion</keyword>
<keyword id="KW-0999">Mitochondrion inner membrane</keyword>
<keyword id="KW-1185">Reference proteome</keyword>
<keyword id="KW-0949">S-adenosyl-L-methionine</keyword>
<keyword id="KW-0808">Transferase</keyword>
<keyword id="KW-0809">Transit peptide</keyword>
<keyword id="KW-0831">Ubiquinone biosynthesis</keyword>
<gene>
    <name evidence="2" type="primary">coq5</name>
    <name type="ORF">SPCC4G3.04c</name>
</gene>
<feature type="transit peptide" description="Mitochondrion" evidence="2">
    <location>
        <begin position="1"/>
        <end position="34"/>
    </location>
</feature>
<feature type="chain" id="PRO_0000193360" description="2-methoxy-6-polyprenyl-1,4-benzoquinol methylase, mitochondrial">
    <location>
        <begin position="35"/>
        <end position="305"/>
    </location>
</feature>
<feature type="binding site" evidence="2">
    <location>
        <position position="117"/>
    </location>
    <ligand>
        <name>S-adenosyl-L-methionine</name>
        <dbReference type="ChEBI" id="CHEBI:59789"/>
    </ligand>
</feature>
<feature type="binding site" evidence="2">
    <location>
        <position position="143"/>
    </location>
    <ligand>
        <name>S-adenosyl-L-methionine</name>
        <dbReference type="ChEBI" id="CHEBI:59789"/>
    </ligand>
</feature>
<feature type="binding site" evidence="2">
    <location>
        <begin position="173"/>
        <end position="174"/>
    </location>
    <ligand>
        <name>S-adenosyl-L-methionine</name>
        <dbReference type="ChEBI" id="CHEBI:59789"/>
    </ligand>
</feature>
<accession>P87230</accession>
<reference key="1">
    <citation type="journal article" date="2002" name="Nature">
        <title>The genome sequence of Schizosaccharomyces pombe.</title>
        <authorList>
            <person name="Wood V."/>
            <person name="Gwilliam R."/>
            <person name="Rajandream M.A."/>
            <person name="Lyne M.H."/>
            <person name="Lyne R."/>
            <person name="Stewart A."/>
            <person name="Sgouros J.G."/>
            <person name="Peat N."/>
            <person name="Hayles J."/>
            <person name="Baker S.G."/>
            <person name="Basham D."/>
            <person name="Bowman S."/>
            <person name="Brooks K."/>
            <person name="Brown D."/>
            <person name="Brown S."/>
            <person name="Chillingworth T."/>
            <person name="Churcher C.M."/>
            <person name="Collins M."/>
            <person name="Connor R."/>
            <person name="Cronin A."/>
            <person name="Davis P."/>
            <person name="Feltwell T."/>
            <person name="Fraser A."/>
            <person name="Gentles S."/>
            <person name="Goble A."/>
            <person name="Hamlin N."/>
            <person name="Harris D.E."/>
            <person name="Hidalgo J."/>
            <person name="Hodgson G."/>
            <person name="Holroyd S."/>
            <person name="Hornsby T."/>
            <person name="Howarth S."/>
            <person name="Huckle E.J."/>
            <person name="Hunt S."/>
            <person name="Jagels K."/>
            <person name="James K.D."/>
            <person name="Jones L."/>
            <person name="Jones M."/>
            <person name="Leather S."/>
            <person name="McDonald S."/>
            <person name="McLean J."/>
            <person name="Mooney P."/>
            <person name="Moule S."/>
            <person name="Mungall K.L."/>
            <person name="Murphy L.D."/>
            <person name="Niblett D."/>
            <person name="Odell C."/>
            <person name="Oliver K."/>
            <person name="O'Neil S."/>
            <person name="Pearson D."/>
            <person name="Quail M.A."/>
            <person name="Rabbinowitsch E."/>
            <person name="Rutherford K.M."/>
            <person name="Rutter S."/>
            <person name="Saunders D."/>
            <person name="Seeger K."/>
            <person name="Sharp S."/>
            <person name="Skelton J."/>
            <person name="Simmonds M.N."/>
            <person name="Squares R."/>
            <person name="Squares S."/>
            <person name="Stevens K."/>
            <person name="Taylor K."/>
            <person name="Taylor R.G."/>
            <person name="Tivey A."/>
            <person name="Walsh S.V."/>
            <person name="Warren T."/>
            <person name="Whitehead S."/>
            <person name="Woodward J.R."/>
            <person name="Volckaert G."/>
            <person name="Aert R."/>
            <person name="Robben J."/>
            <person name="Grymonprez B."/>
            <person name="Weltjens I."/>
            <person name="Vanstreels E."/>
            <person name="Rieger M."/>
            <person name="Schaefer M."/>
            <person name="Mueller-Auer S."/>
            <person name="Gabel C."/>
            <person name="Fuchs M."/>
            <person name="Duesterhoeft A."/>
            <person name="Fritzc C."/>
            <person name="Holzer E."/>
            <person name="Moestl D."/>
            <person name="Hilbert H."/>
            <person name="Borzym K."/>
            <person name="Langer I."/>
            <person name="Beck A."/>
            <person name="Lehrach H."/>
            <person name="Reinhardt R."/>
            <person name="Pohl T.M."/>
            <person name="Eger P."/>
            <person name="Zimmermann W."/>
            <person name="Wedler H."/>
            <person name="Wambutt R."/>
            <person name="Purnelle B."/>
            <person name="Goffeau A."/>
            <person name="Cadieu E."/>
            <person name="Dreano S."/>
            <person name="Gloux S."/>
            <person name="Lelaure V."/>
            <person name="Mottier S."/>
            <person name="Galibert F."/>
            <person name="Aves S.J."/>
            <person name="Xiang Z."/>
            <person name="Hunt C."/>
            <person name="Moore K."/>
            <person name="Hurst S.M."/>
            <person name="Lucas M."/>
            <person name="Rochet M."/>
            <person name="Gaillardin C."/>
            <person name="Tallada V.A."/>
            <person name="Garzon A."/>
            <person name="Thode G."/>
            <person name="Daga R.R."/>
            <person name="Cruzado L."/>
            <person name="Jimenez J."/>
            <person name="Sanchez M."/>
            <person name="del Rey F."/>
            <person name="Benito J."/>
            <person name="Dominguez A."/>
            <person name="Revuelta J.L."/>
            <person name="Moreno S."/>
            <person name="Armstrong J."/>
            <person name="Forsburg S.L."/>
            <person name="Cerutti L."/>
            <person name="Lowe T."/>
            <person name="McCombie W.R."/>
            <person name="Paulsen I."/>
            <person name="Potashkin J."/>
            <person name="Shpakovski G.V."/>
            <person name="Ussery D."/>
            <person name="Barrell B.G."/>
            <person name="Nurse P."/>
        </authorList>
    </citation>
    <scope>NUCLEOTIDE SEQUENCE [LARGE SCALE GENOMIC DNA]</scope>
    <source>
        <strain>972 / ATCC 24843</strain>
    </source>
</reference>
<reference key="2">
    <citation type="journal article" date="2014" name="PLoS ONE">
        <title>Functional conservation of coenzyme Q biosynthetic genes among yeasts, plants, and humans.</title>
        <authorList>
            <person name="Hayashi K."/>
            <person name="Ogiyama Y."/>
            <person name="Yokomi K."/>
            <person name="Nakagawa T."/>
            <person name="Kaino T."/>
            <person name="Kawamukai M."/>
        </authorList>
    </citation>
    <scope>SUBCELLULAR LOCATION</scope>
    <scope>PATHWAY</scope>
</reference>
<proteinExistence type="inferred from homology"/>
<name>COQ5_SCHPO</name>
<protein>
    <recommendedName>
        <fullName evidence="2">2-methoxy-6-polyprenyl-1,4-benzoquinol methylase, mitochondrial</fullName>
        <ecNumber evidence="2">2.1.1.201</ecNumber>
    </recommendedName>
    <alternativeName>
        <fullName evidence="2">Ubiquinone biosynthesis methyltransferase COQ5</fullName>
    </alternativeName>
</protein>
<dbReference type="EC" id="2.1.1.201" evidence="2"/>
<dbReference type="EMBL" id="CU329672">
    <property type="protein sequence ID" value="CAB09781.1"/>
    <property type="molecule type" value="Genomic_DNA"/>
</dbReference>
<dbReference type="PIR" id="T41372">
    <property type="entry name" value="T41372"/>
</dbReference>
<dbReference type="RefSeq" id="NP_587834.1">
    <property type="nucleotide sequence ID" value="NM_001022827.2"/>
</dbReference>
<dbReference type="SMR" id="P87230"/>
<dbReference type="BioGRID" id="276072">
    <property type="interactions" value="30"/>
</dbReference>
<dbReference type="FunCoup" id="P87230">
    <property type="interactions" value="268"/>
</dbReference>
<dbReference type="STRING" id="284812.P87230"/>
<dbReference type="PaxDb" id="4896-SPCC4G3.04c.1"/>
<dbReference type="EnsemblFungi" id="SPCC4G3.04c.1">
    <property type="protein sequence ID" value="SPCC4G3.04c.1:pep"/>
    <property type="gene ID" value="SPCC4G3.04c"/>
</dbReference>
<dbReference type="GeneID" id="2539510"/>
<dbReference type="KEGG" id="spo:2539510"/>
<dbReference type="PomBase" id="SPCC4G3.04c">
    <property type="gene designation" value="coq5"/>
</dbReference>
<dbReference type="VEuPathDB" id="FungiDB:SPCC4G3.04c"/>
<dbReference type="eggNOG" id="KOG1540">
    <property type="taxonomic scope" value="Eukaryota"/>
</dbReference>
<dbReference type="HOGENOM" id="CLU_037990_0_1_1"/>
<dbReference type="InParanoid" id="P87230"/>
<dbReference type="OMA" id="MNDVMSM"/>
<dbReference type="PhylomeDB" id="P87230"/>
<dbReference type="Reactome" id="R-SPO-2142789">
    <property type="pathway name" value="Ubiquinol biosynthesis"/>
</dbReference>
<dbReference type="UniPathway" id="UPA00232"/>
<dbReference type="PRO" id="PR:P87230"/>
<dbReference type="Proteomes" id="UP000002485">
    <property type="component" value="Chromosome III"/>
</dbReference>
<dbReference type="GO" id="GO:0031314">
    <property type="term" value="C:extrinsic component of mitochondrial inner membrane"/>
    <property type="evidence" value="ECO:0007669"/>
    <property type="project" value="UniProtKB-UniRule"/>
</dbReference>
<dbReference type="GO" id="GO:0005739">
    <property type="term" value="C:mitochondrion"/>
    <property type="evidence" value="ECO:0000314"/>
    <property type="project" value="PomBase"/>
</dbReference>
<dbReference type="GO" id="GO:0008425">
    <property type="term" value="F:2-methoxy-6-polyprenyl-1,4-benzoquinol methyltransferase activity"/>
    <property type="evidence" value="ECO:0000318"/>
    <property type="project" value="GO_Central"/>
</dbReference>
<dbReference type="GO" id="GO:0032259">
    <property type="term" value="P:methylation"/>
    <property type="evidence" value="ECO:0007669"/>
    <property type="project" value="UniProtKB-KW"/>
</dbReference>
<dbReference type="GO" id="GO:0006744">
    <property type="term" value="P:ubiquinone biosynthetic process"/>
    <property type="evidence" value="ECO:0000315"/>
    <property type="project" value="PomBase"/>
</dbReference>
<dbReference type="CDD" id="cd02440">
    <property type="entry name" value="AdoMet_MTases"/>
    <property type="match status" value="1"/>
</dbReference>
<dbReference type="Gene3D" id="3.40.50.150">
    <property type="entry name" value="Vaccinia Virus protein VP39"/>
    <property type="match status" value="1"/>
</dbReference>
<dbReference type="HAMAP" id="MF_01813">
    <property type="entry name" value="MenG_UbiE_methyltr"/>
    <property type="match status" value="1"/>
</dbReference>
<dbReference type="InterPro" id="IPR029063">
    <property type="entry name" value="SAM-dependent_MTases_sf"/>
</dbReference>
<dbReference type="InterPro" id="IPR004033">
    <property type="entry name" value="UbiE/COQ5_MeTrFase"/>
</dbReference>
<dbReference type="InterPro" id="IPR023576">
    <property type="entry name" value="UbiE/COQ5_MeTrFase_CS"/>
</dbReference>
<dbReference type="NCBIfam" id="TIGR01934">
    <property type="entry name" value="MenG_MenH_UbiE"/>
    <property type="match status" value="1"/>
</dbReference>
<dbReference type="PANTHER" id="PTHR43591:SF24">
    <property type="entry name" value="2-METHOXY-6-POLYPRENYL-1,4-BENZOQUINOL METHYLASE, MITOCHONDRIAL"/>
    <property type="match status" value="1"/>
</dbReference>
<dbReference type="PANTHER" id="PTHR43591">
    <property type="entry name" value="METHYLTRANSFERASE"/>
    <property type="match status" value="1"/>
</dbReference>
<dbReference type="Pfam" id="PF01209">
    <property type="entry name" value="Ubie_methyltran"/>
    <property type="match status" value="1"/>
</dbReference>
<dbReference type="SUPFAM" id="SSF53335">
    <property type="entry name" value="S-adenosyl-L-methionine-dependent methyltransferases"/>
    <property type="match status" value="1"/>
</dbReference>
<dbReference type="PROSITE" id="PS51608">
    <property type="entry name" value="SAM_MT_UBIE"/>
    <property type="match status" value="1"/>
</dbReference>
<dbReference type="PROSITE" id="PS01183">
    <property type="entry name" value="UBIE_1"/>
    <property type="match status" value="1"/>
</dbReference>
<dbReference type="PROSITE" id="PS01184">
    <property type="entry name" value="UBIE_2"/>
    <property type="match status" value="1"/>
</dbReference>
<evidence type="ECO:0000250" key="1">
    <source>
        <dbReference type="UniProtKB" id="Q5HYK3"/>
    </source>
</evidence>
<evidence type="ECO:0000255" key="2">
    <source>
        <dbReference type="HAMAP-Rule" id="MF_03191"/>
    </source>
</evidence>
<evidence type="ECO:0000269" key="3">
    <source>
    </source>
</evidence>
<comment type="function">
    <text evidence="1">Methyltransferase required for the conversion of 2-decaprenyl-6-methoxy-1,4-benzoquinol (DDMQH2) to 2-decaprenyl-3-methyl-6-methoxy-1,4-benzoquinol (DMQH2).</text>
</comment>
<comment type="catalytic activity">
    <reaction evidence="2">
        <text>2-methoxy-6-(all-trans-decaprenyl)benzene-1,4-diol + S-adenosyl-L-methionine = 5-methoxy-2-methyl-3-(all-trans-decaprenyl)benzene-1,4-diol + S-adenosyl-L-homocysteine + H(+)</text>
        <dbReference type="Rhea" id="RHEA:44764"/>
        <dbReference type="ChEBI" id="CHEBI:15378"/>
        <dbReference type="ChEBI" id="CHEBI:57856"/>
        <dbReference type="ChEBI" id="CHEBI:59789"/>
        <dbReference type="ChEBI" id="CHEBI:64180"/>
        <dbReference type="ChEBI" id="CHEBI:64181"/>
        <dbReference type="EC" id="2.1.1.201"/>
    </reaction>
</comment>
<comment type="pathway">
    <text evidence="2 3">Cofactor biosynthesis; ubiquinone biosynthesis.</text>
</comment>
<comment type="subunit">
    <text evidence="2">Component of a multi-subunit COQ enzyme complex, composed of at least COQ3, COQ4, COQ5, COQ6, COQ7 and COQ9.</text>
</comment>
<comment type="subcellular location">
    <subcellularLocation>
        <location evidence="2 3">Mitochondrion inner membrane</location>
        <topology evidence="2">Peripheral membrane protein</topology>
        <orientation evidence="2">Matrix side</orientation>
    </subcellularLocation>
</comment>
<comment type="similarity">
    <text evidence="2">Belongs to the class I-like SAM-binding methyltransferase superfamily. MenG/UbiE family.</text>
</comment>
<sequence length="305" mass="33888">MSRLRAPVAKFLADGLKGIRSTALAGSRLSNCRYTSTSSKDTDTSSHMTHFGFKDVPEDEKEHLVKNVFSSVAKKYDEMNDAMSLGIHRLWKNIFVSRLNPGNSTVPMKILDVAGGTGDIAFRILNHATNHNGDRNTRVIVADINPDMLSVGLRRSKKTPYYDSGRVEFIEQNAEILDKIPDNSIDMYTIAFGIRNCTHIPKVLEQAYRVLKPGGVFSCLEFSKVYPAPLAELYRQYSFKILPLLGTIIAGDSQSYEYLVESIERFPDAKTFAKMIEDAGFTLAGETGYETLSFGIAAIHTGIKL</sequence>